<evidence type="ECO:0000255" key="1">
    <source>
        <dbReference type="HAMAP-Rule" id="MF_00671"/>
    </source>
</evidence>
<evidence type="ECO:0000256" key="2">
    <source>
        <dbReference type="SAM" id="MobiDB-lite"/>
    </source>
</evidence>
<sequence length="440" mass="49853">MVMTRRIFFSWFIVICSLWLSSFSSVHAKLKGTISSADFNPIPIAITDFVSNDSIGLKIAAVVTADLERSGLFLPLDKASFFEKISNPNSQPHFFHWQKIRAQGLVTGQVIRENDGRLRVDFRLWDVFGHQQLKGRRFYTATERWRRVAHMIADEIYSEMTGESGYFDTRIVFIDETGPQNARIKRLAIMDQDGANLIYISDGSELVLTPRFSPKRQEITYMAYERNQPPHVYLQQIEMGQRELIGTFKNMTIAPRFSSDGQKVIMSLLQNNGSANLYTMDLRTRMMTRLTTTSAIDTSASYSPDGTQIVFSSDRSGKPQIYTMNADGSNLQRISANEGSYSTPIWSPRGDYIAFTKQLEGQFSIGVMRPDGKGERILTTGFHNEGPTWAPNGRVLMFFRKNPGMGPKIYTIDITGRNERQLPTPNDASDPAWSPLLNMQ</sequence>
<proteinExistence type="inferred from homology"/>
<comment type="function">
    <text evidence="1">Part of the Tol-Pal system, which plays a role in outer membrane invagination during cell division and is important for maintaining outer membrane integrity.</text>
</comment>
<comment type="subunit">
    <text evidence="1">The Tol-Pal system is composed of five core proteins: the inner membrane proteins TolA, TolQ and TolR, the periplasmic protein TolB and the outer membrane protein Pal. They form a network linking the inner and outer membranes and the peptidoglycan layer.</text>
</comment>
<comment type="subcellular location">
    <subcellularLocation>
        <location evidence="1">Periplasm</location>
    </subcellularLocation>
</comment>
<comment type="similarity">
    <text evidence="1">Belongs to the TolB family.</text>
</comment>
<accession>Q6FYQ1</accession>
<reference key="1">
    <citation type="journal article" date="2004" name="Proc. Natl. Acad. Sci. U.S.A.">
        <title>The louse-borne human pathogen Bartonella quintana is a genomic derivative of the zoonotic agent Bartonella henselae.</title>
        <authorList>
            <person name="Alsmark U.C.M."/>
            <person name="Frank A.C."/>
            <person name="Karlberg E.O."/>
            <person name="Legault B.-A."/>
            <person name="Ardell D.H."/>
            <person name="Canbaeck B."/>
            <person name="Eriksson A.-S."/>
            <person name="Naeslund A.K."/>
            <person name="Handley S.A."/>
            <person name="Huvet M."/>
            <person name="La Scola B."/>
            <person name="Holmberg M."/>
            <person name="Andersson S.G.E."/>
        </authorList>
    </citation>
    <scope>NUCLEOTIDE SEQUENCE [LARGE SCALE GENOMIC DNA]</scope>
    <source>
        <strain>Toulouse</strain>
    </source>
</reference>
<name>TOLB_BARQU</name>
<gene>
    <name evidence="1" type="primary">tolB</name>
    <name type="ordered locus">BQ11820</name>
</gene>
<organism>
    <name type="scientific">Bartonella quintana (strain Toulouse)</name>
    <name type="common">Rochalimaea quintana</name>
    <dbReference type="NCBI Taxonomy" id="283165"/>
    <lineage>
        <taxon>Bacteria</taxon>
        <taxon>Pseudomonadati</taxon>
        <taxon>Pseudomonadota</taxon>
        <taxon>Alphaproteobacteria</taxon>
        <taxon>Hyphomicrobiales</taxon>
        <taxon>Bartonellaceae</taxon>
        <taxon>Bartonella</taxon>
    </lineage>
</organism>
<feature type="signal peptide" evidence="1">
    <location>
        <begin position="1"/>
        <end position="28"/>
    </location>
</feature>
<feature type="chain" id="PRO_0000034624" description="Tol-Pal system protein TolB" evidence="1">
    <location>
        <begin position="29"/>
        <end position="440"/>
    </location>
</feature>
<feature type="region of interest" description="Disordered" evidence="2">
    <location>
        <begin position="417"/>
        <end position="440"/>
    </location>
</feature>
<protein>
    <recommendedName>
        <fullName evidence="1">Tol-Pal system protein TolB</fullName>
    </recommendedName>
</protein>
<dbReference type="EMBL" id="BX897700">
    <property type="protein sequence ID" value="CAF26641.1"/>
    <property type="molecule type" value="Genomic_DNA"/>
</dbReference>
<dbReference type="SMR" id="Q6FYQ1"/>
<dbReference type="KEGG" id="bqu:BQ11820"/>
<dbReference type="eggNOG" id="COG0823">
    <property type="taxonomic scope" value="Bacteria"/>
</dbReference>
<dbReference type="HOGENOM" id="CLU_047123_0_0_5"/>
<dbReference type="Proteomes" id="UP000000597">
    <property type="component" value="Chromosome"/>
</dbReference>
<dbReference type="GO" id="GO:0042597">
    <property type="term" value="C:periplasmic space"/>
    <property type="evidence" value="ECO:0007669"/>
    <property type="project" value="UniProtKB-SubCell"/>
</dbReference>
<dbReference type="GO" id="GO:0051301">
    <property type="term" value="P:cell division"/>
    <property type="evidence" value="ECO:0007669"/>
    <property type="project" value="UniProtKB-UniRule"/>
</dbReference>
<dbReference type="GO" id="GO:0017038">
    <property type="term" value="P:protein import"/>
    <property type="evidence" value="ECO:0007669"/>
    <property type="project" value="InterPro"/>
</dbReference>
<dbReference type="Gene3D" id="2.120.10.30">
    <property type="entry name" value="TolB, C-terminal domain"/>
    <property type="match status" value="1"/>
</dbReference>
<dbReference type="Gene3D" id="3.40.50.10070">
    <property type="entry name" value="TolB, N-terminal domain"/>
    <property type="match status" value="1"/>
</dbReference>
<dbReference type="HAMAP" id="MF_00671">
    <property type="entry name" value="TolB"/>
    <property type="match status" value="1"/>
</dbReference>
<dbReference type="InterPro" id="IPR011042">
    <property type="entry name" value="6-blade_b-propeller_TolB-like"/>
</dbReference>
<dbReference type="InterPro" id="IPR011659">
    <property type="entry name" value="PD40"/>
</dbReference>
<dbReference type="InterPro" id="IPR014167">
    <property type="entry name" value="Tol-Pal_TolB"/>
</dbReference>
<dbReference type="InterPro" id="IPR007195">
    <property type="entry name" value="TolB_N"/>
</dbReference>
<dbReference type="NCBIfam" id="TIGR02800">
    <property type="entry name" value="propeller_TolB"/>
    <property type="match status" value="1"/>
</dbReference>
<dbReference type="PANTHER" id="PTHR36842:SF1">
    <property type="entry name" value="PROTEIN TOLB"/>
    <property type="match status" value="1"/>
</dbReference>
<dbReference type="PANTHER" id="PTHR36842">
    <property type="entry name" value="PROTEIN TOLB HOMOLOG"/>
    <property type="match status" value="1"/>
</dbReference>
<dbReference type="Pfam" id="PF07676">
    <property type="entry name" value="PD40"/>
    <property type="match status" value="2"/>
</dbReference>
<dbReference type="Pfam" id="PF04052">
    <property type="entry name" value="TolB_N"/>
    <property type="match status" value="1"/>
</dbReference>
<dbReference type="SUPFAM" id="SSF52964">
    <property type="entry name" value="TolB, N-terminal domain"/>
    <property type="match status" value="1"/>
</dbReference>
<dbReference type="SUPFAM" id="SSF69304">
    <property type="entry name" value="Tricorn protease N-terminal domain"/>
    <property type="match status" value="1"/>
</dbReference>
<keyword id="KW-0131">Cell cycle</keyword>
<keyword id="KW-0132">Cell division</keyword>
<keyword id="KW-0574">Periplasm</keyword>
<keyword id="KW-0732">Signal</keyword>